<accession>Q197E9</accession>
<organism>
    <name type="scientific">Invertebrate iridescent virus 3</name>
    <name type="common">IIV-3</name>
    <name type="synonym">Mosquito iridescent virus</name>
    <dbReference type="NCBI Taxonomy" id="345201"/>
    <lineage>
        <taxon>Viruses</taxon>
        <taxon>Varidnaviria</taxon>
        <taxon>Bamfordvirae</taxon>
        <taxon>Nucleocytoviricota</taxon>
        <taxon>Megaviricetes</taxon>
        <taxon>Pimascovirales</taxon>
        <taxon>Iridoviridae</taxon>
        <taxon>Betairidovirinae</taxon>
        <taxon>Chloriridovirus</taxon>
    </lineage>
</organism>
<sequence length="751" mass="84876">MMESPKYKKSTCSVTNLGGTCILPQKGATAPKAKDVSPELLVNKMDNLCQDWARTRNEYNKVHIEQAPTDSYFGVVHSHTPKKKYTSRDSDSEPEATSTRRSATAQRAANLKSSPVDQWSTTPPQPQPQPAAPTVKKTCASSPPAALSVKRTCTSPPPPPVLIDDDTGEDAFYDTNDPDIFYDIENGVSELETEGPKRPVYYQRNIRYPIDGSVPQESEQWYDPIDDEFLASSGDVVSLEPSPIAAFQPTPPKTVQFVPMPEEIIVPPPPPPKTVVDEGVQAMPYTVDQMIQTDFEESPLLANVNLRTIPIEEVNPNFSPVLMQDMVRDSFVFGTVAQRVMASQRVKQFFKELIEQDVSLAGRMCMDSGSPQLNLYNSLMGVKLLYRWRSSTTFYRAIVPEIDEPVQVMQDVLSSSEWAKFDSQAGIPPKMVYIHYKLLNDLVKTLICPNFQLTHAALVCVDCRPEAVGSDGLQDGRQRRCSNLVSEYHEMTLEDLFNTIKPADLNAKNIILSVLFQMLYAVATVQKQFGMGGLFANADSVHVRRIQPGGFWHYTVNGLRYSVPNYGYLVILTNFTDVVNYRPDFATTRYFGRRQAKVVPTRNWYKFVPFTTRYRPFVTVDPITQAKTTAYAPNPPTEGITINEFYKDSSDLRPSVPVDLNDMITFPVPEFHLTICRLFSFFSKFYDSNFIGNDPFVRNLVDRYSQPFEFPDVYWPEDGVSRVLACYTIEEIYPNWVDGDTDYVIESYNLD</sequence>
<reference key="1">
    <citation type="journal article" date="2006" name="J. Virol.">
        <title>Genome of invertebrate iridescent virus type 3 (mosquito iridescent virus).</title>
        <authorList>
            <person name="Delhon G."/>
            <person name="Tulman E.R."/>
            <person name="Afonso C.L."/>
            <person name="Lu Z."/>
            <person name="Becnel J.J."/>
            <person name="Moser B.A."/>
            <person name="Kutish G.F."/>
            <person name="Rock D.L."/>
        </authorList>
    </citation>
    <scope>NUCLEOTIDE SEQUENCE [LARGE SCALE GENOMIC DNA]</scope>
</reference>
<keyword id="KW-1185">Reference proteome</keyword>
<dbReference type="EMBL" id="DQ643392">
    <property type="protein sequence ID" value="ABF82041.1"/>
    <property type="molecule type" value="Genomic_DNA"/>
</dbReference>
<dbReference type="RefSeq" id="YP_654583.1">
    <property type="nucleotide sequence ID" value="NC_008187.1"/>
</dbReference>
<dbReference type="KEGG" id="vg:4156260"/>
<dbReference type="OrthoDB" id="3146at10239"/>
<dbReference type="Proteomes" id="UP000001358">
    <property type="component" value="Genome"/>
</dbReference>
<feature type="chain" id="PRO_0000377801" description="Uncharacterized protein 011L">
    <location>
        <begin position="1"/>
        <end position="751"/>
    </location>
</feature>
<feature type="region of interest" description="Disordered" evidence="1">
    <location>
        <begin position="73"/>
        <end position="169"/>
    </location>
</feature>
<feature type="compositionally biased region" description="Low complexity" evidence="1">
    <location>
        <begin position="96"/>
        <end position="109"/>
    </location>
</feature>
<feature type="compositionally biased region" description="Polar residues" evidence="1">
    <location>
        <begin position="111"/>
        <end position="120"/>
    </location>
</feature>
<gene>
    <name type="ORF">IIV3-011L</name>
</gene>
<evidence type="ECO:0000256" key="1">
    <source>
        <dbReference type="SAM" id="MobiDB-lite"/>
    </source>
</evidence>
<proteinExistence type="predicted"/>
<name>011L_IIV3</name>
<protein>
    <recommendedName>
        <fullName>Uncharacterized protein 011L</fullName>
    </recommendedName>
</protein>
<organismHost>
    <name type="scientific">Aedes vexans</name>
    <name type="common">Inland floodwater mosquito</name>
    <name type="synonym">Culex vexans</name>
    <dbReference type="NCBI Taxonomy" id="7163"/>
</organismHost>
<organismHost>
    <name type="scientific">Culex territans</name>
    <dbReference type="NCBI Taxonomy" id="42431"/>
</organismHost>
<organismHost>
    <name type="scientific">Culiseta annulata</name>
    <dbReference type="NCBI Taxonomy" id="332058"/>
</organismHost>
<organismHost>
    <name type="scientific">Ochlerotatus sollicitans</name>
    <name type="common">eastern saltmarsh mosquito</name>
    <dbReference type="NCBI Taxonomy" id="310513"/>
</organismHost>
<organismHost>
    <name type="scientific">Ochlerotatus taeniorhynchus</name>
    <name type="common">Black salt marsh mosquito</name>
    <name type="synonym">Aedes taeniorhynchus</name>
    <dbReference type="NCBI Taxonomy" id="329105"/>
</organismHost>
<organismHost>
    <name type="scientific">Psorophora ferox</name>
    <dbReference type="NCBI Taxonomy" id="7183"/>
</organismHost>